<organism>
    <name type="scientific">Helicobacter pylori (strain ATCC 700392 / 26695)</name>
    <name type="common">Campylobacter pylori</name>
    <dbReference type="NCBI Taxonomy" id="85962"/>
    <lineage>
        <taxon>Bacteria</taxon>
        <taxon>Pseudomonadati</taxon>
        <taxon>Campylobacterota</taxon>
        <taxon>Epsilonproteobacteria</taxon>
        <taxon>Campylobacterales</taxon>
        <taxon>Helicobacteraceae</taxon>
        <taxon>Helicobacter</taxon>
    </lineage>
</organism>
<proteinExistence type="evidence at protein level"/>
<comment type="function">
    <text evidence="1">Converts molybdopterin precursor Z into molybdopterin. This requires the incorporation of two sulfur atoms into precursor Z to generate a dithiolene group. The sulfur is provided by MoaD (By similarity).</text>
</comment>
<comment type="catalytic activity">
    <reaction>
        <text>2 [molybdopterin-synthase sulfur-carrier protein]-C-terminal-Gly-aminoethanethioate + cyclic pyranopterin phosphate + H2O = molybdopterin + 2 [molybdopterin-synthase sulfur-carrier protein]-C-terminal Gly-Gly + 2 H(+)</text>
        <dbReference type="Rhea" id="RHEA:26333"/>
        <dbReference type="Rhea" id="RHEA-COMP:12202"/>
        <dbReference type="Rhea" id="RHEA-COMP:19907"/>
        <dbReference type="ChEBI" id="CHEBI:15377"/>
        <dbReference type="ChEBI" id="CHEBI:15378"/>
        <dbReference type="ChEBI" id="CHEBI:58698"/>
        <dbReference type="ChEBI" id="CHEBI:59648"/>
        <dbReference type="ChEBI" id="CHEBI:90778"/>
        <dbReference type="ChEBI" id="CHEBI:232372"/>
        <dbReference type="EC" id="2.8.1.12"/>
    </reaction>
</comment>
<comment type="pathway">
    <text>Cofactor biosynthesis; molybdopterin biosynthesis.</text>
</comment>
<comment type="subunit">
    <text evidence="1">Heterotetramer of 2 MoaD subunits and 2 MoaE subunits. Also stable as homodimer. The enzyme changes between these two forms during catalysis (By similarity).</text>
</comment>
<comment type="interaction">
    <interactant intactId="EBI-7674385">
        <id>P56422</id>
    </interactant>
    <interactant intactId="EBI-7674271">
        <id>O25482</id>
        <label>HP_0801</label>
    </interactant>
    <organismsDiffer>false</organismsDiffer>
    <experiments>3</experiments>
</comment>
<comment type="similarity">
    <text evidence="2">Belongs to the MoaE family.</text>
</comment>
<sequence>MLKIIQGALDTRELLKAYQEEACAKNFGAFCVFVGIVRKEDNIQGLSFDIYEALLKTWFEKWHHKAKDLGVVLKMAHSLGDVLIGQSSFLCVSMGKNRKNALELYENFIEDFKHNAPIWKYDLIHNKRIYAKERSHPLKGSGLLA</sequence>
<accession>P56422</accession>
<reference key="1">
    <citation type="journal article" date="1997" name="Nature">
        <title>The complete genome sequence of the gastric pathogen Helicobacter pylori.</title>
        <authorList>
            <person name="Tomb J.-F."/>
            <person name="White O."/>
            <person name="Kerlavage A.R."/>
            <person name="Clayton R.A."/>
            <person name="Sutton G.G."/>
            <person name="Fleischmann R.D."/>
            <person name="Ketchum K.A."/>
            <person name="Klenk H.-P."/>
            <person name="Gill S.R."/>
            <person name="Dougherty B.A."/>
            <person name="Nelson K.E."/>
            <person name="Quackenbush J."/>
            <person name="Zhou L."/>
            <person name="Kirkness E.F."/>
            <person name="Peterson S.N."/>
            <person name="Loftus B.J."/>
            <person name="Richardson D.L."/>
            <person name="Dodson R.J."/>
            <person name="Khalak H.G."/>
            <person name="Glodek A."/>
            <person name="McKenney K."/>
            <person name="FitzGerald L.M."/>
            <person name="Lee N."/>
            <person name="Adams M.D."/>
            <person name="Hickey E.K."/>
            <person name="Berg D.E."/>
            <person name="Gocayne J.D."/>
            <person name="Utterback T.R."/>
            <person name="Peterson J.D."/>
            <person name="Kelley J.M."/>
            <person name="Cotton M.D."/>
            <person name="Weidman J.F."/>
            <person name="Fujii C."/>
            <person name="Bowman C."/>
            <person name="Watthey L."/>
            <person name="Wallin E."/>
            <person name="Hayes W.S."/>
            <person name="Borodovsky M."/>
            <person name="Karp P.D."/>
            <person name="Smith H.O."/>
            <person name="Fraser C.M."/>
            <person name="Venter J.C."/>
        </authorList>
    </citation>
    <scope>NUCLEOTIDE SEQUENCE [LARGE SCALE GENOMIC DNA]</scope>
    <source>
        <strain>ATCC 700392 / 26695</strain>
    </source>
</reference>
<dbReference type="EC" id="2.8.1.12"/>
<dbReference type="EMBL" id="AE000511">
    <property type="protein sequence ID" value="AAD07850.1"/>
    <property type="molecule type" value="Genomic_DNA"/>
</dbReference>
<dbReference type="PIR" id="H64619">
    <property type="entry name" value="H64619"/>
</dbReference>
<dbReference type="RefSeq" id="NP_207593.1">
    <property type="nucleotide sequence ID" value="NC_000915.1"/>
</dbReference>
<dbReference type="RefSeq" id="WP_000912676.1">
    <property type="nucleotide sequence ID" value="NC_018939.1"/>
</dbReference>
<dbReference type="PDB" id="3RPF">
    <property type="method" value="X-ray"/>
    <property type="resolution" value="1.90 A"/>
    <property type="chains" value="A/B=2-145"/>
</dbReference>
<dbReference type="PDBsum" id="3RPF"/>
<dbReference type="SMR" id="P56422"/>
<dbReference type="DIP" id="DIP-3522N"/>
<dbReference type="IntAct" id="P56422">
    <property type="interactions" value="9"/>
</dbReference>
<dbReference type="MINT" id="P56422"/>
<dbReference type="STRING" id="85962.HP_0800"/>
<dbReference type="PaxDb" id="85962-C694_04100"/>
<dbReference type="DNASU" id="898921"/>
<dbReference type="EnsemblBacteria" id="AAD07850">
    <property type="protein sequence ID" value="AAD07850"/>
    <property type="gene ID" value="HP_0800"/>
</dbReference>
<dbReference type="KEGG" id="heo:C694_04100"/>
<dbReference type="KEGG" id="hpy:HP_0800"/>
<dbReference type="PATRIC" id="fig|85962.47.peg.852"/>
<dbReference type="eggNOG" id="COG0314">
    <property type="taxonomic scope" value="Bacteria"/>
</dbReference>
<dbReference type="InParanoid" id="P56422"/>
<dbReference type="OrthoDB" id="9803224at2"/>
<dbReference type="PhylomeDB" id="P56422"/>
<dbReference type="UniPathway" id="UPA00344"/>
<dbReference type="EvolutionaryTrace" id="P56422"/>
<dbReference type="Proteomes" id="UP000000429">
    <property type="component" value="Chromosome"/>
</dbReference>
<dbReference type="GO" id="GO:0005829">
    <property type="term" value="C:cytosol"/>
    <property type="evidence" value="ECO:0000318"/>
    <property type="project" value="GO_Central"/>
</dbReference>
<dbReference type="GO" id="GO:0030366">
    <property type="term" value="F:molybdopterin synthase activity"/>
    <property type="evidence" value="ECO:0007669"/>
    <property type="project" value="UniProtKB-EC"/>
</dbReference>
<dbReference type="GO" id="GO:0006777">
    <property type="term" value="P:Mo-molybdopterin cofactor biosynthetic process"/>
    <property type="evidence" value="ECO:0007669"/>
    <property type="project" value="UniProtKB-KW"/>
</dbReference>
<dbReference type="CDD" id="cd00756">
    <property type="entry name" value="MoaE"/>
    <property type="match status" value="1"/>
</dbReference>
<dbReference type="Gene3D" id="3.90.1170.40">
    <property type="entry name" value="Molybdopterin biosynthesis MoaE subunit"/>
    <property type="match status" value="1"/>
</dbReference>
<dbReference type="InterPro" id="IPR036563">
    <property type="entry name" value="MoaE_sf"/>
</dbReference>
<dbReference type="InterPro" id="IPR003448">
    <property type="entry name" value="Mopterin_biosynth_MoaE"/>
</dbReference>
<dbReference type="PANTHER" id="PTHR23404">
    <property type="entry name" value="MOLYBDOPTERIN SYNTHASE RELATED"/>
    <property type="match status" value="1"/>
</dbReference>
<dbReference type="Pfam" id="PF02391">
    <property type="entry name" value="MoaE"/>
    <property type="match status" value="1"/>
</dbReference>
<dbReference type="SUPFAM" id="SSF54690">
    <property type="entry name" value="Molybdopterin synthase subunit MoaE"/>
    <property type="match status" value="1"/>
</dbReference>
<evidence type="ECO:0000250" key="1"/>
<evidence type="ECO:0000305" key="2"/>
<evidence type="ECO:0007829" key="3">
    <source>
        <dbReference type="PDB" id="3RPF"/>
    </source>
</evidence>
<gene>
    <name type="primary">moaE</name>
    <name type="ordered locus">HP_0800</name>
</gene>
<feature type="chain" id="PRO_0000163086" description="Molybdopterin synthase catalytic subunit">
    <location>
        <begin position="1"/>
        <end position="145"/>
    </location>
</feature>
<feature type="binding site" evidence="1">
    <location>
        <begin position="36"/>
        <end position="38"/>
    </location>
    <ligand>
        <name>substrate</name>
    </ligand>
</feature>
<feature type="binding site" evidence="1">
    <location>
        <begin position="97"/>
        <end position="98"/>
    </location>
    <ligand>
        <name>substrate</name>
    </ligand>
</feature>
<feature type="binding site" evidence="1">
    <location>
        <position position="113"/>
    </location>
    <ligand>
        <name>substrate</name>
    </ligand>
</feature>
<feature type="binding site" evidence="1">
    <location>
        <begin position="120"/>
        <end position="122"/>
    </location>
    <ligand>
        <name>substrate</name>
    </ligand>
</feature>
<feature type="strand" evidence="3">
    <location>
        <begin position="2"/>
        <end position="8"/>
    </location>
</feature>
<feature type="helix" evidence="3">
    <location>
        <begin position="11"/>
        <end position="24"/>
    </location>
</feature>
<feature type="strand" evidence="3">
    <location>
        <begin position="29"/>
        <end position="36"/>
    </location>
</feature>
<feature type="strand" evidence="3">
    <location>
        <begin position="45"/>
        <end position="50"/>
    </location>
</feature>
<feature type="helix" evidence="3">
    <location>
        <begin position="52"/>
        <end position="68"/>
    </location>
</feature>
<feature type="strand" evidence="3">
    <location>
        <begin position="71"/>
        <end position="83"/>
    </location>
</feature>
<feature type="strand" evidence="3">
    <location>
        <begin position="87"/>
        <end position="97"/>
    </location>
</feature>
<feature type="helix" evidence="3">
    <location>
        <begin position="98"/>
        <end position="115"/>
    </location>
</feature>
<feature type="strand" evidence="3">
    <location>
        <begin position="118"/>
        <end position="124"/>
    </location>
</feature>
<feature type="strand" evidence="3">
    <location>
        <begin position="127"/>
        <end position="130"/>
    </location>
</feature>
<feature type="helix" evidence="3">
    <location>
        <begin position="132"/>
        <end position="134"/>
    </location>
</feature>
<feature type="turn" evidence="3">
    <location>
        <begin position="139"/>
        <end position="142"/>
    </location>
</feature>
<name>MOAE_HELPY</name>
<protein>
    <recommendedName>
        <fullName>Molybdopterin synthase catalytic subunit</fullName>
        <ecNumber>2.8.1.12</ecNumber>
    </recommendedName>
    <alternativeName>
        <fullName>MPT synthase subunit 2</fullName>
    </alternativeName>
    <alternativeName>
        <fullName>Molybdenum cofactor biosynthesis protein E</fullName>
    </alternativeName>
    <alternativeName>
        <fullName>Molybdopterin-converting factor large subunit</fullName>
    </alternativeName>
    <alternativeName>
        <fullName>Molybdopterin-converting factor subunit 2</fullName>
    </alternativeName>
</protein>
<keyword id="KW-0002">3D-structure</keyword>
<keyword id="KW-0501">Molybdenum cofactor biosynthesis</keyword>
<keyword id="KW-1185">Reference proteome</keyword>
<keyword id="KW-0808">Transferase</keyword>